<sequence>MTPEHLPTEQYDAQLAEKVARLQSMMAPFSGLVPEVFRSPASHYRMRAEFRLWHDGDDLYHIMFDQQTKSRIRVDSFPAASQLINTLMKAMIAGVRDNHALRHKLFQIDYLTTLSNQAVVSLLYHKKLDEEWREAATALRDALRAQGLNVHLIGRATKTKIELDQDYIDERLPVAGKEMIYRQVENSFTQPNAAMNIQMLEWALEVTKDSKGDLLELYCGNGNFSLALARNFNRVLATEIAKPSVAAAQYNIAANHIDNVQIIRMAAEEFTQAMNGVREFNRLQGIDLKRYQCETIFVDPPRSGLDSETEKMVQAYPRILYISCNPETLCKNLETLSQTHTVSRLALFDQFPYTHHMECGVLLTAK</sequence>
<evidence type="ECO:0000255" key="1">
    <source>
        <dbReference type="HAMAP-Rule" id="MF_01011"/>
    </source>
</evidence>
<comment type="function">
    <text evidence="1">Dual-specificity methyltransferase that catalyzes the formation of 5-methyluridine at position 54 (m5U54) in all tRNAs, and that of position 341 (m5U341) in tmRNA (transfer-mRNA).</text>
</comment>
<comment type="catalytic activity">
    <reaction evidence="1">
        <text>uridine(54) in tRNA + S-adenosyl-L-methionine = 5-methyluridine(54) in tRNA + S-adenosyl-L-homocysteine + H(+)</text>
        <dbReference type="Rhea" id="RHEA:42712"/>
        <dbReference type="Rhea" id="RHEA-COMP:10167"/>
        <dbReference type="Rhea" id="RHEA-COMP:10193"/>
        <dbReference type="ChEBI" id="CHEBI:15378"/>
        <dbReference type="ChEBI" id="CHEBI:57856"/>
        <dbReference type="ChEBI" id="CHEBI:59789"/>
        <dbReference type="ChEBI" id="CHEBI:65315"/>
        <dbReference type="ChEBI" id="CHEBI:74447"/>
        <dbReference type="EC" id="2.1.1.35"/>
    </reaction>
</comment>
<comment type="catalytic activity">
    <reaction evidence="1">
        <text>uridine(341) in tmRNA + S-adenosyl-L-methionine = 5-methyluridine(341) in tmRNA + S-adenosyl-L-homocysteine + H(+)</text>
        <dbReference type="Rhea" id="RHEA:43612"/>
        <dbReference type="Rhea" id="RHEA-COMP:10630"/>
        <dbReference type="Rhea" id="RHEA-COMP:10631"/>
        <dbReference type="ChEBI" id="CHEBI:15378"/>
        <dbReference type="ChEBI" id="CHEBI:57856"/>
        <dbReference type="ChEBI" id="CHEBI:59789"/>
        <dbReference type="ChEBI" id="CHEBI:65315"/>
        <dbReference type="ChEBI" id="CHEBI:74447"/>
    </reaction>
</comment>
<comment type="similarity">
    <text evidence="1">Belongs to the class I-like SAM-binding methyltransferase superfamily. RNA M5U methyltransferase family. TrmA subfamily.</text>
</comment>
<name>TRMA_SALAR</name>
<organism>
    <name type="scientific">Salmonella arizonae (strain ATCC BAA-731 / CDC346-86 / RSK2980)</name>
    <dbReference type="NCBI Taxonomy" id="41514"/>
    <lineage>
        <taxon>Bacteria</taxon>
        <taxon>Pseudomonadati</taxon>
        <taxon>Pseudomonadota</taxon>
        <taxon>Gammaproteobacteria</taxon>
        <taxon>Enterobacterales</taxon>
        <taxon>Enterobacteriaceae</taxon>
        <taxon>Salmonella</taxon>
    </lineage>
</organism>
<accession>A9MHG7</accession>
<proteinExistence type="inferred from homology"/>
<feature type="chain" id="PRO_1000084039" description="tRNA/tmRNA (uracil-C(5))-methyltransferase">
    <location>
        <begin position="1"/>
        <end position="366"/>
    </location>
</feature>
<feature type="active site" description="Nucleophile" evidence="1">
    <location>
        <position position="324"/>
    </location>
</feature>
<feature type="active site" description="Proton acceptor" evidence="1">
    <location>
        <position position="358"/>
    </location>
</feature>
<feature type="binding site" evidence="1">
    <location>
        <position position="190"/>
    </location>
    <ligand>
        <name>S-adenosyl-L-methionine</name>
        <dbReference type="ChEBI" id="CHEBI:59789"/>
    </ligand>
</feature>
<feature type="binding site" evidence="1">
    <location>
        <position position="218"/>
    </location>
    <ligand>
        <name>S-adenosyl-L-methionine</name>
        <dbReference type="ChEBI" id="CHEBI:59789"/>
    </ligand>
</feature>
<feature type="binding site" evidence="1">
    <location>
        <position position="223"/>
    </location>
    <ligand>
        <name>S-adenosyl-L-methionine</name>
        <dbReference type="ChEBI" id="CHEBI:59789"/>
    </ligand>
</feature>
<feature type="binding site" evidence="1">
    <location>
        <position position="239"/>
    </location>
    <ligand>
        <name>S-adenosyl-L-methionine</name>
        <dbReference type="ChEBI" id="CHEBI:59789"/>
    </ligand>
</feature>
<feature type="binding site" evidence="1">
    <location>
        <position position="299"/>
    </location>
    <ligand>
        <name>S-adenosyl-L-methionine</name>
        <dbReference type="ChEBI" id="CHEBI:59789"/>
    </ligand>
</feature>
<keyword id="KW-0489">Methyltransferase</keyword>
<keyword id="KW-1185">Reference proteome</keyword>
<keyword id="KW-0949">S-adenosyl-L-methionine</keyword>
<keyword id="KW-0808">Transferase</keyword>
<keyword id="KW-0819">tRNA processing</keyword>
<gene>
    <name evidence="1" type="primary">trmA</name>
    <name type="ordered locus">SARI_03534</name>
</gene>
<reference key="1">
    <citation type="submission" date="2007-11" db="EMBL/GenBank/DDBJ databases">
        <authorList>
            <consortium name="The Salmonella enterica serovar Arizonae Genome Sequencing Project"/>
            <person name="McClelland M."/>
            <person name="Sanderson E.K."/>
            <person name="Porwollik S."/>
            <person name="Spieth J."/>
            <person name="Clifton W.S."/>
            <person name="Fulton R."/>
            <person name="Chunyan W."/>
            <person name="Wollam A."/>
            <person name="Shah N."/>
            <person name="Pepin K."/>
            <person name="Bhonagiri V."/>
            <person name="Nash W."/>
            <person name="Johnson M."/>
            <person name="Thiruvilangam P."/>
            <person name="Wilson R."/>
        </authorList>
    </citation>
    <scope>NUCLEOTIDE SEQUENCE [LARGE SCALE GENOMIC DNA]</scope>
    <source>
        <strain>ATCC BAA-731 / CDC346-86 / RSK2980</strain>
    </source>
</reference>
<dbReference type="EC" id="2.1.1.-" evidence="1"/>
<dbReference type="EC" id="2.1.1.35" evidence="1"/>
<dbReference type="EMBL" id="CP000880">
    <property type="protein sequence ID" value="ABX23350.1"/>
    <property type="molecule type" value="Genomic_DNA"/>
</dbReference>
<dbReference type="SMR" id="A9MHG7"/>
<dbReference type="STRING" id="41514.SARI_03534"/>
<dbReference type="KEGG" id="ses:SARI_03534"/>
<dbReference type="HOGENOM" id="CLU_043022_0_0_6"/>
<dbReference type="Proteomes" id="UP000002084">
    <property type="component" value="Chromosome"/>
</dbReference>
<dbReference type="GO" id="GO:0005829">
    <property type="term" value="C:cytosol"/>
    <property type="evidence" value="ECO:0007669"/>
    <property type="project" value="TreeGrafter"/>
</dbReference>
<dbReference type="GO" id="GO:0019843">
    <property type="term" value="F:rRNA binding"/>
    <property type="evidence" value="ECO:0007669"/>
    <property type="project" value="TreeGrafter"/>
</dbReference>
<dbReference type="GO" id="GO:0030697">
    <property type="term" value="F:tRNA (uracil(54)-C5)-methyltransferase activity, S-adenosyl methionine-dependent"/>
    <property type="evidence" value="ECO:0007669"/>
    <property type="project" value="UniProtKB-UniRule"/>
</dbReference>
<dbReference type="GO" id="GO:0000049">
    <property type="term" value="F:tRNA binding"/>
    <property type="evidence" value="ECO:0007669"/>
    <property type="project" value="TreeGrafter"/>
</dbReference>
<dbReference type="GO" id="GO:0030488">
    <property type="term" value="P:tRNA methylation"/>
    <property type="evidence" value="ECO:0007669"/>
    <property type="project" value="UniProtKB-UniRule"/>
</dbReference>
<dbReference type="CDD" id="cd02440">
    <property type="entry name" value="AdoMet_MTases"/>
    <property type="match status" value="1"/>
</dbReference>
<dbReference type="FunFam" id="2.40.50.1070:FF:000001">
    <property type="entry name" value="tRNA/tmRNA (uracil-C(5))-methyltransferase"/>
    <property type="match status" value="1"/>
</dbReference>
<dbReference type="FunFam" id="3.40.50.150:FF:000012">
    <property type="entry name" value="tRNA/tmRNA (uracil-C(5))-methyltransferase"/>
    <property type="match status" value="1"/>
</dbReference>
<dbReference type="Gene3D" id="2.40.50.1070">
    <property type="match status" value="1"/>
</dbReference>
<dbReference type="Gene3D" id="3.40.50.150">
    <property type="entry name" value="Vaccinia Virus protein VP39"/>
    <property type="match status" value="1"/>
</dbReference>
<dbReference type="HAMAP" id="MF_01011">
    <property type="entry name" value="RNA_methyltr_TrmA"/>
    <property type="match status" value="1"/>
</dbReference>
<dbReference type="InterPro" id="IPR030390">
    <property type="entry name" value="MeTrfase_TrmA_AS"/>
</dbReference>
<dbReference type="InterPro" id="IPR030391">
    <property type="entry name" value="MeTrfase_TrmA_CS"/>
</dbReference>
<dbReference type="InterPro" id="IPR029063">
    <property type="entry name" value="SAM-dependent_MTases_sf"/>
</dbReference>
<dbReference type="InterPro" id="IPR011869">
    <property type="entry name" value="TrmA_MeTrfase"/>
</dbReference>
<dbReference type="InterPro" id="IPR010280">
    <property type="entry name" value="U5_MeTrfase_fam"/>
</dbReference>
<dbReference type="NCBIfam" id="TIGR02143">
    <property type="entry name" value="trmA_only"/>
    <property type="match status" value="1"/>
</dbReference>
<dbReference type="PANTHER" id="PTHR47790">
    <property type="entry name" value="TRNA/TMRNA (URACIL-C(5))-METHYLTRANSFERASE"/>
    <property type="match status" value="1"/>
</dbReference>
<dbReference type="PANTHER" id="PTHR47790:SF2">
    <property type="entry name" value="TRNA_TMRNA (URACIL-C(5))-METHYLTRANSFERASE"/>
    <property type="match status" value="1"/>
</dbReference>
<dbReference type="Pfam" id="PF05958">
    <property type="entry name" value="tRNA_U5-meth_tr"/>
    <property type="match status" value="1"/>
</dbReference>
<dbReference type="SUPFAM" id="SSF53335">
    <property type="entry name" value="S-adenosyl-L-methionine-dependent methyltransferases"/>
    <property type="match status" value="1"/>
</dbReference>
<dbReference type="PROSITE" id="PS51687">
    <property type="entry name" value="SAM_MT_RNA_M5U"/>
    <property type="match status" value="1"/>
</dbReference>
<dbReference type="PROSITE" id="PS01230">
    <property type="entry name" value="TRMA_1"/>
    <property type="match status" value="1"/>
</dbReference>
<dbReference type="PROSITE" id="PS01231">
    <property type="entry name" value="TRMA_2"/>
    <property type="match status" value="1"/>
</dbReference>
<protein>
    <recommendedName>
        <fullName evidence="1">tRNA/tmRNA (uracil-C(5))-methyltransferase</fullName>
        <ecNumber evidence="1">2.1.1.-</ecNumber>
        <ecNumber evidence="1">2.1.1.35</ecNumber>
    </recommendedName>
    <alternativeName>
        <fullName evidence="1">tRNA (uracil(54)-C(5))-methyltransferase</fullName>
    </alternativeName>
    <alternativeName>
        <fullName evidence="1">tRNA(m5U54)-methyltransferase</fullName>
        <shortName evidence="1">RUMT</shortName>
    </alternativeName>
    <alternativeName>
        <fullName evidence="1">tmRNA (uracil(341)-C(5))-methyltransferase</fullName>
    </alternativeName>
</protein>